<name>THRC_HAEIN</name>
<organism>
    <name type="scientific">Haemophilus influenzae (strain ATCC 51907 / DSM 11121 / KW20 / Rd)</name>
    <dbReference type="NCBI Taxonomy" id="71421"/>
    <lineage>
        <taxon>Bacteria</taxon>
        <taxon>Pseudomonadati</taxon>
        <taxon>Pseudomonadota</taxon>
        <taxon>Gammaproteobacteria</taxon>
        <taxon>Pasteurellales</taxon>
        <taxon>Pasteurellaceae</taxon>
        <taxon>Haemophilus</taxon>
    </lineage>
</organism>
<dbReference type="EC" id="4.2.3.1"/>
<dbReference type="EMBL" id="L42023">
    <property type="protein sequence ID" value="AAC21765.1"/>
    <property type="molecule type" value="Genomic_DNA"/>
</dbReference>
<dbReference type="PIR" id="H64047">
    <property type="entry name" value="H64047"/>
</dbReference>
<dbReference type="RefSeq" id="NP_438260.1">
    <property type="nucleotide sequence ID" value="NC_000907.1"/>
</dbReference>
<dbReference type="SMR" id="P44503"/>
<dbReference type="STRING" id="71421.HI_0087"/>
<dbReference type="EnsemblBacteria" id="AAC21765">
    <property type="protein sequence ID" value="AAC21765"/>
    <property type="gene ID" value="HI_0087"/>
</dbReference>
<dbReference type="KEGG" id="hin:HI_0087"/>
<dbReference type="PATRIC" id="fig|71421.8.peg.88"/>
<dbReference type="eggNOG" id="COG0498">
    <property type="taxonomic scope" value="Bacteria"/>
</dbReference>
<dbReference type="HOGENOM" id="CLU_015170_0_0_6"/>
<dbReference type="OrthoDB" id="9763107at2"/>
<dbReference type="PhylomeDB" id="P44503"/>
<dbReference type="BioCyc" id="HINF71421:G1GJ1-92-MONOMER"/>
<dbReference type="UniPathway" id="UPA00050">
    <property type="reaction ID" value="UER00065"/>
</dbReference>
<dbReference type="Proteomes" id="UP000000579">
    <property type="component" value="Chromosome"/>
</dbReference>
<dbReference type="GO" id="GO:0030170">
    <property type="term" value="F:pyridoxal phosphate binding"/>
    <property type="evidence" value="ECO:0007669"/>
    <property type="project" value="InterPro"/>
</dbReference>
<dbReference type="GO" id="GO:0004795">
    <property type="term" value="F:threonine synthase activity"/>
    <property type="evidence" value="ECO:0007669"/>
    <property type="project" value="UniProtKB-EC"/>
</dbReference>
<dbReference type="GO" id="GO:0009088">
    <property type="term" value="P:threonine biosynthetic process"/>
    <property type="evidence" value="ECO:0007669"/>
    <property type="project" value="UniProtKB-UniPathway"/>
</dbReference>
<dbReference type="FunFam" id="3.40.50.1100:FF:000026">
    <property type="entry name" value="Threonine synthase"/>
    <property type="match status" value="1"/>
</dbReference>
<dbReference type="Gene3D" id="3.40.50.1100">
    <property type="match status" value="2"/>
</dbReference>
<dbReference type="Gene3D" id="3.90.1380.10">
    <property type="entry name" value="Threonine synthase, N-terminal domain"/>
    <property type="match status" value="1"/>
</dbReference>
<dbReference type="InterPro" id="IPR000634">
    <property type="entry name" value="Ser/Thr_deHydtase_PyrdxlP-BS"/>
</dbReference>
<dbReference type="InterPro" id="IPR029144">
    <property type="entry name" value="Thr_synth_N"/>
</dbReference>
<dbReference type="InterPro" id="IPR037158">
    <property type="entry name" value="Thr_synth_N_sf"/>
</dbReference>
<dbReference type="InterPro" id="IPR004450">
    <property type="entry name" value="Thr_synthase-like"/>
</dbReference>
<dbReference type="InterPro" id="IPR051166">
    <property type="entry name" value="Threonine_Synthase"/>
</dbReference>
<dbReference type="InterPro" id="IPR001926">
    <property type="entry name" value="TrpB-like_PALP"/>
</dbReference>
<dbReference type="InterPro" id="IPR036052">
    <property type="entry name" value="TrpB-like_PALP_sf"/>
</dbReference>
<dbReference type="NCBIfam" id="TIGR00260">
    <property type="entry name" value="thrC"/>
    <property type="match status" value="1"/>
</dbReference>
<dbReference type="PANTHER" id="PTHR42690">
    <property type="entry name" value="THREONINE SYNTHASE FAMILY MEMBER"/>
    <property type="match status" value="1"/>
</dbReference>
<dbReference type="PANTHER" id="PTHR42690:SF1">
    <property type="entry name" value="THREONINE SYNTHASE-LIKE 2"/>
    <property type="match status" value="1"/>
</dbReference>
<dbReference type="Pfam" id="PF00291">
    <property type="entry name" value="PALP"/>
    <property type="match status" value="1"/>
</dbReference>
<dbReference type="Pfam" id="PF14821">
    <property type="entry name" value="Thr_synth_N"/>
    <property type="match status" value="1"/>
</dbReference>
<dbReference type="SUPFAM" id="SSF53686">
    <property type="entry name" value="Tryptophan synthase beta subunit-like PLP-dependent enzymes"/>
    <property type="match status" value="1"/>
</dbReference>
<dbReference type="PROSITE" id="PS00165">
    <property type="entry name" value="DEHYDRATASE_SER_THR"/>
    <property type="match status" value="1"/>
</dbReference>
<keyword id="KW-0028">Amino-acid biosynthesis</keyword>
<keyword id="KW-0456">Lyase</keyword>
<keyword id="KW-0663">Pyridoxal phosphate</keyword>
<keyword id="KW-1185">Reference proteome</keyword>
<keyword id="KW-0791">Threonine biosynthesis</keyword>
<protein>
    <recommendedName>
        <fullName>Threonine synthase</fullName>
        <shortName>TS</shortName>
        <ecNumber>4.2.3.1</ecNumber>
    </recommendedName>
</protein>
<gene>
    <name type="primary">thrC</name>
    <name type="ordered locus">HI_0087</name>
</gene>
<evidence type="ECO:0000250" key="1"/>
<evidence type="ECO:0000305" key="2"/>
<sequence length="425" mass="46682">MNLYNIKHPEEQVTFSQAVRQGLGRDQGLFFPEVIPQLNNINELLELPLVERSQKILGALIDGELPQATLDAMVKNAFTFPAPLEKVEENIYALELFHGPTLAFKDFGGRFMAQALAAVRGDGKITILTATSGDTGAAVAHAFYGLENINVVILYPKGKISPLQEKLFCTLGGNIRTVAINADFDACQALVKQAFDDVELRQAIGLNSANSINISRLLAQVCYYFEAVAQLPKEKRDNVVVSVPSGNFGNLTAGLIAKTLGLPIKRFVASTNANDTVPRYLKSGNWDPKTTVATLSNAMDVSRPNNWPRVEELFKRNGWDLTDLGSGMLSDSETEDTLKAMQSKGYLCEPHGAIAYQVLKDQLKASETGIFLCTAHPAKFKESVERILGIQLPLPETLDKHNQLPLLSDEMDNDFAQLRAYLLKS</sequence>
<comment type="function">
    <text evidence="1">Catalyzes the gamma-elimination of phosphate from L-phosphohomoserine and the beta-addition of water to produce L-threonine.</text>
</comment>
<comment type="catalytic activity">
    <reaction>
        <text>O-phospho-L-homoserine + H2O = L-threonine + phosphate</text>
        <dbReference type="Rhea" id="RHEA:10840"/>
        <dbReference type="ChEBI" id="CHEBI:15377"/>
        <dbReference type="ChEBI" id="CHEBI:43474"/>
        <dbReference type="ChEBI" id="CHEBI:57590"/>
        <dbReference type="ChEBI" id="CHEBI:57926"/>
        <dbReference type="EC" id="4.2.3.1"/>
    </reaction>
</comment>
<comment type="cofactor">
    <cofactor evidence="1">
        <name>pyridoxal 5'-phosphate</name>
        <dbReference type="ChEBI" id="CHEBI:597326"/>
    </cofactor>
</comment>
<comment type="pathway">
    <text>Amino-acid biosynthesis; L-threonine biosynthesis; L-threonine from L-aspartate: step 5/5.</text>
</comment>
<comment type="similarity">
    <text evidence="2">Belongs to the threonine synthase family.</text>
</comment>
<accession>P44503</accession>
<proteinExistence type="inferred from homology"/>
<feature type="chain" id="PRO_0000185632" description="Threonine synthase">
    <location>
        <begin position="1"/>
        <end position="425"/>
    </location>
</feature>
<feature type="modified residue" description="N6-(pyridoxal phosphate)lysine" evidence="1">
    <location>
        <position position="105"/>
    </location>
</feature>
<reference key="1">
    <citation type="journal article" date="1995" name="Science">
        <title>Whole-genome random sequencing and assembly of Haemophilus influenzae Rd.</title>
        <authorList>
            <person name="Fleischmann R.D."/>
            <person name="Adams M.D."/>
            <person name="White O."/>
            <person name="Clayton R.A."/>
            <person name="Kirkness E.F."/>
            <person name="Kerlavage A.R."/>
            <person name="Bult C.J."/>
            <person name="Tomb J.-F."/>
            <person name="Dougherty B.A."/>
            <person name="Merrick J.M."/>
            <person name="McKenney K."/>
            <person name="Sutton G.G."/>
            <person name="FitzHugh W."/>
            <person name="Fields C.A."/>
            <person name="Gocayne J.D."/>
            <person name="Scott J.D."/>
            <person name="Shirley R."/>
            <person name="Liu L.-I."/>
            <person name="Glodek A."/>
            <person name="Kelley J.M."/>
            <person name="Weidman J.F."/>
            <person name="Phillips C.A."/>
            <person name="Spriggs T."/>
            <person name="Hedblom E."/>
            <person name="Cotton M.D."/>
            <person name="Utterback T.R."/>
            <person name="Hanna M.C."/>
            <person name="Nguyen D.T."/>
            <person name="Saudek D.M."/>
            <person name="Brandon R.C."/>
            <person name="Fine L.D."/>
            <person name="Fritchman J.L."/>
            <person name="Fuhrmann J.L."/>
            <person name="Geoghagen N.S.M."/>
            <person name="Gnehm C.L."/>
            <person name="McDonald L.A."/>
            <person name="Small K.V."/>
            <person name="Fraser C.M."/>
            <person name="Smith H.O."/>
            <person name="Venter J.C."/>
        </authorList>
    </citation>
    <scope>NUCLEOTIDE SEQUENCE [LARGE SCALE GENOMIC DNA]</scope>
    <source>
        <strain>ATCC 51907 / DSM 11121 / KW20 / Rd</strain>
    </source>
</reference>